<dbReference type="EC" id="6.1.1.12" evidence="1"/>
<dbReference type="EMBL" id="CU928164">
    <property type="protein sequence ID" value="CAR17317.1"/>
    <property type="molecule type" value="Genomic_DNA"/>
</dbReference>
<dbReference type="RefSeq" id="WP_001258666.1">
    <property type="nucleotide sequence ID" value="NC_011750.1"/>
</dbReference>
<dbReference type="RefSeq" id="YP_002407191.1">
    <property type="nucleotide sequence ID" value="NC_011750.1"/>
</dbReference>
<dbReference type="SMR" id="B7NS52"/>
<dbReference type="STRING" id="585057.ECIAI39_1183"/>
<dbReference type="KEGG" id="ect:ECIAI39_1183"/>
<dbReference type="PATRIC" id="fig|585057.6.peg.1240"/>
<dbReference type="HOGENOM" id="CLU_014330_3_2_6"/>
<dbReference type="Proteomes" id="UP000000749">
    <property type="component" value="Chromosome"/>
</dbReference>
<dbReference type="GO" id="GO:0005737">
    <property type="term" value="C:cytoplasm"/>
    <property type="evidence" value="ECO:0007669"/>
    <property type="project" value="UniProtKB-SubCell"/>
</dbReference>
<dbReference type="GO" id="GO:0004815">
    <property type="term" value="F:aspartate-tRNA ligase activity"/>
    <property type="evidence" value="ECO:0007669"/>
    <property type="project" value="UniProtKB-UniRule"/>
</dbReference>
<dbReference type="GO" id="GO:0005524">
    <property type="term" value="F:ATP binding"/>
    <property type="evidence" value="ECO:0007669"/>
    <property type="project" value="UniProtKB-UniRule"/>
</dbReference>
<dbReference type="GO" id="GO:0003676">
    <property type="term" value="F:nucleic acid binding"/>
    <property type="evidence" value="ECO:0007669"/>
    <property type="project" value="InterPro"/>
</dbReference>
<dbReference type="GO" id="GO:0006422">
    <property type="term" value="P:aspartyl-tRNA aminoacylation"/>
    <property type="evidence" value="ECO:0007669"/>
    <property type="project" value="UniProtKB-UniRule"/>
</dbReference>
<dbReference type="CDD" id="cd00777">
    <property type="entry name" value="AspRS_core"/>
    <property type="match status" value="1"/>
</dbReference>
<dbReference type="CDD" id="cd04317">
    <property type="entry name" value="EcAspRS_like_N"/>
    <property type="match status" value="1"/>
</dbReference>
<dbReference type="FunFam" id="2.40.50.140:FF:000080">
    <property type="entry name" value="Aspartate--tRNA ligase"/>
    <property type="match status" value="1"/>
</dbReference>
<dbReference type="FunFam" id="3.30.1360.30:FF:000001">
    <property type="entry name" value="Aspartate--tRNA ligase"/>
    <property type="match status" value="1"/>
</dbReference>
<dbReference type="Gene3D" id="3.30.930.10">
    <property type="entry name" value="Bira Bifunctional Protein, Domain 2"/>
    <property type="match status" value="1"/>
</dbReference>
<dbReference type="Gene3D" id="3.30.1360.30">
    <property type="entry name" value="GAD-like domain"/>
    <property type="match status" value="1"/>
</dbReference>
<dbReference type="Gene3D" id="2.40.50.140">
    <property type="entry name" value="Nucleic acid-binding proteins"/>
    <property type="match status" value="1"/>
</dbReference>
<dbReference type="HAMAP" id="MF_00044">
    <property type="entry name" value="Asp_tRNA_synth_type1"/>
    <property type="match status" value="1"/>
</dbReference>
<dbReference type="InterPro" id="IPR004364">
    <property type="entry name" value="Aa-tRNA-synt_II"/>
</dbReference>
<dbReference type="InterPro" id="IPR006195">
    <property type="entry name" value="aa-tRNA-synth_II"/>
</dbReference>
<dbReference type="InterPro" id="IPR045864">
    <property type="entry name" value="aa-tRNA-synth_II/BPL/LPL"/>
</dbReference>
<dbReference type="InterPro" id="IPR004524">
    <property type="entry name" value="Asp-tRNA-ligase_1"/>
</dbReference>
<dbReference type="InterPro" id="IPR047089">
    <property type="entry name" value="Asp-tRNA-ligase_1_N"/>
</dbReference>
<dbReference type="InterPro" id="IPR002312">
    <property type="entry name" value="Asp/Asn-tRNA-synth_IIb"/>
</dbReference>
<dbReference type="InterPro" id="IPR047090">
    <property type="entry name" value="AspRS_core"/>
</dbReference>
<dbReference type="InterPro" id="IPR004115">
    <property type="entry name" value="GAD-like_sf"/>
</dbReference>
<dbReference type="InterPro" id="IPR029351">
    <property type="entry name" value="GAD_dom"/>
</dbReference>
<dbReference type="InterPro" id="IPR012340">
    <property type="entry name" value="NA-bd_OB-fold"/>
</dbReference>
<dbReference type="InterPro" id="IPR004365">
    <property type="entry name" value="NA-bd_OB_tRNA"/>
</dbReference>
<dbReference type="NCBIfam" id="TIGR00459">
    <property type="entry name" value="aspS_bact"/>
    <property type="match status" value="1"/>
</dbReference>
<dbReference type="NCBIfam" id="NF001750">
    <property type="entry name" value="PRK00476.1"/>
    <property type="match status" value="1"/>
</dbReference>
<dbReference type="PANTHER" id="PTHR22594:SF5">
    <property type="entry name" value="ASPARTATE--TRNA LIGASE, MITOCHONDRIAL"/>
    <property type="match status" value="1"/>
</dbReference>
<dbReference type="PANTHER" id="PTHR22594">
    <property type="entry name" value="ASPARTYL/LYSYL-TRNA SYNTHETASE"/>
    <property type="match status" value="1"/>
</dbReference>
<dbReference type="Pfam" id="PF02938">
    <property type="entry name" value="GAD"/>
    <property type="match status" value="1"/>
</dbReference>
<dbReference type="Pfam" id="PF00152">
    <property type="entry name" value="tRNA-synt_2"/>
    <property type="match status" value="1"/>
</dbReference>
<dbReference type="Pfam" id="PF01336">
    <property type="entry name" value="tRNA_anti-codon"/>
    <property type="match status" value="1"/>
</dbReference>
<dbReference type="PRINTS" id="PR01042">
    <property type="entry name" value="TRNASYNTHASP"/>
</dbReference>
<dbReference type="SUPFAM" id="SSF55681">
    <property type="entry name" value="Class II aaRS and biotin synthetases"/>
    <property type="match status" value="1"/>
</dbReference>
<dbReference type="SUPFAM" id="SSF55261">
    <property type="entry name" value="GAD domain-like"/>
    <property type="match status" value="1"/>
</dbReference>
<dbReference type="SUPFAM" id="SSF50249">
    <property type="entry name" value="Nucleic acid-binding proteins"/>
    <property type="match status" value="1"/>
</dbReference>
<dbReference type="PROSITE" id="PS50862">
    <property type="entry name" value="AA_TRNA_LIGASE_II"/>
    <property type="match status" value="1"/>
</dbReference>
<gene>
    <name evidence="1" type="primary">aspS</name>
    <name type="ordered locus">ECIAI39_1183</name>
</gene>
<proteinExistence type="inferred from homology"/>
<sequence length="590" mass="65842">MRTEYCGQLRLSHVGQQVTLCGWVNRRRDLGSLIFIDMRDREGIVQVFFDPDRADALKLASELRNEFCIQVTGTVRARDEKNINRDMATGEIEVLASSLTIINRADVLPLDSNHVNTEEARLKYRYLDLRRPEMAQRLKTRAKITSLVRRFMDDHGFLDIETPMLTKATPEGARDYLVPSRVHKGKFYALPQSPQLFKQLLMMSGFDRYYQIVKCFRDEDLRADRQPEFTQIDVETSFMTAPQVREVMEALVRHLWLEVKGVDLGDFPVMTFAEAERRYGSDKPDLRNPMELTDVADLLKSVEFAVFAGPANDPKGRVAALRVPGGASLTRKQIDEYGNFVKIYGAKGLAYIKVNERAKGLEGINSPVAKFLNAEIIEAILDRTAAQDGDMIFFGADNKKIVADAMGALRLKVGKDLGLTDESKWAPLWVIDFPMFEDDGEGGLTAMHHPFTSPKDMTAAELKAAPENAVASAYDMVINGYEVGGGSVRIHNGDMQQTVFGILGINEEEQREKFGFLLDALKYGTPPHAGLAFGLDRLTMLLTGTDNIRDVIAFPKTTAAACLMTEAPSFANPTALAELSIQVVKKAENN</sequence>
<comment type="function">
    <text evidence="1">Catalyzes the attachment of L-aspartate to tRNA(Asp) in a two-step reaction: L-aspartate is first activated by ATP to form Asp-AMP and then transferred to the acceptor end of tRNA(Asp).</text>
</comment>
<comment type="catalytic activity">
    <reaction evidence="1">
        <text>tRNA(Asp) + L-aspartate + ATP = L-aspartyl-tRNA(Asp) + AMP + diphosphate</text>
        <dbReference type="Rhea" id="RHEA:19649"/>
        <dbReference type="Rhea" id="RHEA-COMP:9660"/>
        <dbReference type="Rhea" id="RHEA-COMP:9678"/>
        <dbReference type="ChEBI" id="CHEBI:29991"/>
        <dbReference type="ChEBI" id="CHEBI:30616"/>
        <dbReference type="ChEBI" id="CHEBI:33019"/>
        <dbReference type="ChEBI" id="CHEBI:78442"/>
        <dbReference type="ChEBI" id="CHEBI:78516"/>
        <dbReference type="ChEBI" id="CHEBI:456215"/>
        <dbReference type="EC" id="6.1.1.12"/>
    </reaction>
</comment>
<comment type="subunit">
    <text evidence="1">Homodimer.</text>
</comment>
<comment type="subcellular location">
    <subcellularLocation>
        <location evidence="1">Cytoplasm</location>
    </subcellularLocation>
</comment>
<comment type="similarity">
    <text evidence="1">Belongs to the class-II aminoacyl-tRNA synthetase family. Type 1 subfamily.</text>
</comment>
<organism>
    <name type="scientific">Escherichia coli O7:K1 (strain IAI39 / ExPEC)</name>
    <dbReference type="NCBI Taxonomy" id="585057"/>
    <lineage>
        <taxon>Bacteria</taxon>
        <taxon>Pseudomonadati</taxon>
        <taxon>Pseudomonadota</taxon>
        <taxon>Gammaproteobacteria</taxon>
        <taxon>Enterobacterales</taxon>
        <taxon>Enterobacteriaceae</taxon>
        <taxon>Escherichia</taxon>
    </lineage>
</organism>
<keyword id="KW-0030">Aminoacyl-tRNA synthetase</keyword>
<keyword id="KW-0067">ATP-binding</keyword>
<keyword id="KW-0963">Cytoplasm</keyword>
<keyword id="KW-0436">Ligase</keyword>
<keyword id="KW-0547">Nucleotide-binding</keyword>
<keyword id="KW-0648">Protein biosynthesis</keyword>
<protein>
    <recommendedName>
        <fullName evidence="1">Aspartate--tRNA ligase</fullName>
        <ecNumber evidence="1">6.1.1.12</ecNumber>
    </recommendedName>
    <alternativeName>
        <fullName evidence="1">Aspartyl-tRNA synthetase</fullName>
        <shortName evidence="1">AspRS</shortName>
    </alternativeName>
</protein>
<feature type="chain" id="PRO_1000198987" description="Aspartate--tRNA ligase">
    <location>
        <begin position="1"/>
        <end position="590"/>
    </location>
</feature>
<feature type="region of interest" description="Aspartate" evidence="1">
    <location>
        <begin position="195"/>
        <end position="198"/>
    </location>
</feature>
<feature type="binding site" evidence="1">
    <location>
        <position position="171"/>
    </location>
    <ligand>
        <name>L-aspartate</name>
        <dbReference type="ChEBI" id="CHEBI:29991"/>
    </ligand>
</feature>
<feature type="binding site" evidence="1">
    <location>
        <begin position="217"/>
        <end position="219"/>
    </location>
    <ligand>
        <name>ATP</name>
        <dbReference type="ChEBI" id="CHEBI:30616"/>
    </ligand>
</feature>
<feature type="binding site" evidence="1">
    <location>
        <position position="217"/>
    </location>
    <ligand>
        <name>L-aspartate</name>
        <dbReference type="ChEBI" id="CHEBI:29991"/>
    </ligand>
</feature>
<feature type="binding site" evidence="1">
    <location>
        <position position="226"/>
    </location>
    <ligand>
        <name>ATP</name>
        <dbReference type="ChEBI" id="CHEBI:30616"/>
    </ligand>
</feature>
<feature type="binding site" evidence="1">
    <location>
        <position position="448"/>
    </location>
    <ligand>
        <name>L-aspartate</name>
        <dbReference type="ChEBI" id="CHEBI:29991"/>
    </ligand>
</feature>
<feature type="binding site" evidence="1">
    <location>
        <position position="482"/>
    </location>
    <ligand>
        <name>ATP</name>
        <dbReference type="ChEBI" id="CHEBI:30616"/>
    </ligand>
</feature>
<feature type="binding site" evidence="1">
    <location>
        <position position="489"/>
    </location>
    <ligand>
        <name>L-aspartate</name>
        <dbReference type="ChEBI" id="CHEBI:29991"/>
    </ligand>
</feature>
<feature type="binding site" evidence="1">
    <location>
        <begin position="534"/>
        <end position="537"/>
    </location>
    <ligand>
        <name>ATP</name>
        <dbReference type="ChEBI" id="CHEBI:30616"/>
    </ligand>
</feature>
<reference key="1">
    <citation type="journal article" date="2009" name="PLoS Genet.">
        <title>Organised genome dynamics in the Escherichia coli species results in highly diverse adaptive paths.</title>
        <authorList>
            <person name="Touchon M."/>
            <person name="Hoede C."/>
            <person name="Tenaillon O."/>
            <person name="Barbe V."/>
            <person name="Baeriswyl S."/>
            <person name="Bidet P."/>
            <person name="Bingen E."/>
            <person name="Bonacorsi S."/>
            <person name="Bouchier C."/>
            <person name="Bouvet O."/>
            <person name="Calteau A."/>
            <person name="Chiapello H."/>
            <person name="Clermont O."/>
            <person name="Cruveiller S."/>
            <person name="Danchin A."/>
            <person name="Diard M."/>
            <person name="Dossat C."/>
            <person name="Karoui M.E."/>
            <person name="Frapy E."/>
            <person name="Garry L."/>
            <person name="Ghigo J.M."/>
            <person name="Gilles A.M."/>
            <person name="Johnson J."/>
            <person name="Le Bouguenec C."/>
            <person name="Lescat M."/>
            <person name="Mangenot S."/>
            <person name="Martinez-Jehanne V."/>
            <person name="Matic I."/>
            <person name="Nassif X."/>
            <person name="Oztas S."/>
            <person name="Petit M.A."/>
            <person name="Pichon C."/>
            <person name="Rouy Z."/>
            <person name="Ruf C.S."/>
            <person name="Schneider D."/>
            <person name="Tourret J."/>
            <person name="Vacherie B."/>
            <person name="Vallenet D."/>
            <person name="Medigue C."/>
            <person name="Rocha E.P.C."/>
            <person name="Denamur E."/>
        </authorList>
    </citation>
    <scope>NUCLEOTIDE SEQUENCE [LARGE SCALE GENOMIC DNA]</scope>
    <source>
        <strain>IAI39 / ExPEC</strain>
    </source>
</reference>
<accession>B7NS52</accession>
<name>SYD_ECO7I</name>
<evidence type="ECO:0000255" key="1">
    <source>
        <dbReference type="HAMAP-Rule" id="MF_00044"/>
    </source>
</evidence>